<feature type="chain" id="PRO_1000128175" description="Small ribosomal subunit protein uS9">
    <location>
        <begin position="1"/>
        <end position="130"/>
    </location>
</feature>
<protein>
    <recommendedName>
        <fullName evidence="1">Small ribosomal subunit protein uS9</fullName>
    </recommendedName>
    <alternativeName>
        <fullName evidence="2">30S ribosomal protein S9</fullName>
    </alternativeName>
</protein>
<dbReference type="EMBL" id="CP000961">
    <property type="protein sequence ID" value="ACA88477.1"/>
    <property type="molecule type" value="Genomic_DNA"/>
</dbReference>
<dbReference type="RefSeq" id="WP_012141096.1">
    <property type="nucleotide sequence ID" value="NC_010506.1"/>
</dbReference>
<dbReference type="SMR" id="B1KII1"/>
<dbReference type="STRING" id="392500.Swoo_4221"/>
<dbReference type="KEGG" id="swd:Swoo_4221"/>
<dbReference type="eggNOG" id="COG0103">
    <property type="taxonomic scope" value="Bacteria"/>
</dbReference>
<dbReference type="HOGENOM" id="CLU_046483_2_1_6"/>
<dbReference type="Proteomes" id="UP000002168">
    <property type="component" value="Chromosome"/>
</dbReference>
<dbReference type="GO" id="GO:0022627">
    <property type="term" value="C:cytosolic small ribosomal subunit"/>
    <property type="evidence" value="ECO:0007669"/>
    <property type="project" value="TreeGrafter"/>
</dbReference>
<dbReference type="GO" id="GO:0003723">
    <property type="term" value="F:RNA binding"/>
    <property type="evidence" value="ECO:0007669"/>
    <property type="project" value="TreeGrafter"/>
</dbReference>
<dbReference type="GO" id="GO:0003735">
    <property type="term" value="F:structural constituent of ribosome"/>
    <property type="evidence" value="ECO:0007669"/>
    <property type="project" value="InterPro"/>
</dbReference>
<dbReference type="GO" id="GO:0006412">
    <property type="term" value="P:translation"/>
    <property type="evidence" value="ECO:0007669"/>
    <property type="project" value="UniProtKB-UniRule"/>
</dbReference>
<dbReference type="FunFam" id="3.30.230.10:FF:000001">
    <property type="entry name" value="30S ribosomal protein S9"/>
    <property type="match status" value="1"/>
</dbReference>
<dbReference type="Gene3D" id="3.30.230.10">
    <property type="match status" value="1"/>
</dbReference>
<dbReference type="HAMAP" id="MF_00532_B">
    <property type="entry name" value="Ribosomal_uS9_B"/>
    <property type="match status" value="1"/>
</dbReference>
<dbReference type="InterPro" id="IPR020568">
    <property type="entry name" value="Ribosomal_Su5_D2-typ_SF"/>
</dbReference>
<dbReference type="InterPro" id="IPR000754">
    <property type="entry name" value="Ribosomal_uS9"/>
</dbReference>
<dbReference type="InterPro" id="IPR023035">
    <property type="entry name" value="Ribosomal_uS9_bac/plastid"/>
</dbReference>
<dbReference type="InterPro" id="IPR020574">
    <property type="entry name" value="Ribosomal_uS9_CS"/>
</dbReference>
<dbReference type="InterPro" id="IPR014721">
    <property type="entry name" value="Ribsml_uS5_D2-typ_fold_subgr"/>
</dbReference>
<dbReference type="NCBIfam" id="NF001099">
    <property type="entry name" value="PRK00132.1"/>
    <property type="match status" value="1"/>
</dbReference>
<dbReference type="PANTHER" id="PTHR21569">
    <property type="entry name" value="RIBOSOMAL PROTEIN S9"/>
    <property type="match status" value="1"/>
</dbReference>
<dbReference type="PANTHER" id="PTHR21569:SF1">
    <property type="entry name" value="SMALL RIBOSOMAL SUBUNIT PROTEIN US9M"/>
    <property type="match status" value="1"/>
</dbReference>
<dbReference type="Pfam" id="PF00380">
    <property type="entry name" value="Ribosomal_S9"/>
    <property type="match status" value="1"/>
</dbReference>
<dbReference type="SUPFAM" id="SSF54211">
    <property type="entry name" value="Ribosomal protein S5 domain 2-like"/>
    <property type="match status" value="1"/>
</dbReference>
<dbReference type="PROSITE" id="PS00360">
    <property type="entry name" value="RIBOSOMAL_S9"/>
    <property type="match status" value="1"/>
</dbReference>
<proteinExistence type="inferred from homology"/>
<name>RS9_SHEWM</name>
<keyword id="KW-1185">Reference proteome</keyword>
<keyword id="KW-0687">Ribonucleoprotein</keyword>
<keyword id="KW-0689">Ribosomal protein</keyword>
<gene>
    <name evidence="1" type="primary">rpsI</name>
    <name type="ordered locus">Swoo_4221</name>
</gene>
<accession>B1KII1</accession>
<comment type="similarity">
    <text evidence="1">Belongs to the universal ribosomal protein uS9 family.</text>
</comment>
<reference key="1">
    <citation type="submission" date="2008-02" db="EMBL/GenBank/DDBJ databases">
        <title>Complete sequence of Shewanella woodyi ATCC 51908.</title>
        <authorList>
            <consortium name="US DOE Joint Genome Institute"/>
            <person name="Copeland A."/>
            <person name="Lucas S."/>
            <person name="Lapidus A."/>
            <person name="Glavina del Rio T."/>
            <person name="Dalin E."/>
            <person name="Tice H."/>
            <person name="Bruce D."/>
            <person name="Goodwin L."/>
            <person name="Pitluck S."/>
            <person name="Sims D."/>
            <person name="Brettin T."/>
            <person name="Detter J.C."/>
            <person name="Han C."/>
            <person name="Kuske C.R."/>
            <person name="Schmutz J."/>
            <person name="Larimer F."/>
            <person name="Land M."/>
            <person name="Hauser L."/>
            <person name="Kyrpides N."/>
            <person name="Lykidis A."/>
            <person name="Zhao J.-S."/>
            <person name="Richardson P."/>
        </authorList>
    </citation>
    <scope>NUCLEOTIDE SEQUENCE [LARGE SCALE GENOMIC DNA]</scope>
    <source>
        <strain>ATCC 51908 / MS32</strain>
    </source>
</reference>
<sequence length="130" mass="14537">MAATQYYGTGRRKTSTARVFAKVGTGNIVVNQLPLDQYFGRETSRMVVRQPLELVEMTDKLDIFVTVKGGGNTGQAGAIRHGITRALMELDESLRPSLRAAGFVTRDARKVERKKVGLRKARRKPQFSKR</sequence>
<evidence type="ECO:0000255" key="1">
    <source>
        <dbReference type="HAMAP-Rule" id="MF_00532"/>
    </source>
</evidence>
<evidence type="ECO:0000305" key="2"/>
<organism>
    <name type="scientific">Shewanella woodyi (strain ATCC 51908 / MS32)</name>
    <dbReference type="NCBI Taxonomy" id="392500"/>
    <lineage>
        <taxon>Bacteria</taxon>
        <taxon>Pseudomonadati</taxon>
        <taxon>Pseudomonadota</taxon>
        <taxon>Gammaproteobacteria</taxon>
        <taxon>Alteromonadales</taxon>
        <taxon>Shewanellaceae</taxon>
        <taxon>Shewanella</taxon>
    </lineage>
</organism>